<reference key="1">
    <citation type="journal article" date="2007" name="PLoS Genet.">
        <title>Genome analysis of Minibacterium massiliensis highlights the convergent evolution of water-living bacteria.</title>
        <authorList>
            <person name="Audic S."/>
            <person name="Robert C."/>
            <person name="Campagna B."/>
            <person name="Parinello H."/>
            <person name="Claverie J.-M."/>
            <person name="Raoult D."/>
            <person name="Drancourt M."/>
        </authorList>
    </citation>
    <scope>NUCLEOTIDE SEQUENCE [LARGE SCALE GENOMIC DNA]</scope>
    <source>
        <strain>Marseille</strain>
    </source>
</reference>
<organism>
    <name type="scientific">Janthinobacterium sp. (strain Marseille)</name>
    <name type="common">Minibacterium massiliensis</name>
    <dbReference type="NCBI Taxonomy" id="375286"/>
    <lineage>
        <taxon>Bacteria</taxon>
        <taxon>Pseudomonadati</taxon>
        <taxon>Pseudomonadota</taxon>
        <taxon>Betaproteobacteria</taxon>
        <taxon>Burkholderiales</taxon>
        <taxon>Oxalobacteraceae</taxon>
        <taxon>Janthinobacterium</taxon>
    </lineage>
</organism>
<evidence type="ECO:0000255" key="1">
    <source>
        <dbReference type="HAMAP-Rule" id="MF_00146"/>
    </source>
</evidence>
<feature type="chain" id="PRO_1000009743" description="dCTP deaminase">
    <location>
        <begin position="1"/>
        <end position="188"/>
    </location>
</feature>
<feature type="active site" description="Proton donor/acceptor" evidence="1">
    <location>
        <position position="137"/>
    </location>
</feature>
<feature type="binding site" evidence="1">
    <location>
        <begin position="111"/>
        <end position="116"/>
    </location>
    <ligand>
        <name>dCTP</name>
        <dbReference type="ChEBI" id="CHEBI:61481"/>
    </ligand>
</feature>
<feature type="binding site" evidence="1">
    <location>
        <begin position="135"/>
        <end position="137"/>
    </location>
    <ligand>
        <name>dCTP</name>
        <dbReference type="ChEBI" id="CHEBI:61481"/>
    </ligand>
</feature>
<feature type="binding site" evidence="1">
    <location>
        <position position="156"/>
    </location>
    <ligand>
        <name>dCTP</name>
        <dbReference type="ChEBI" id="CHEBI:61481"/>
    </ligand>
</feature>
<feature type="binding site" evidence="1">
    <location>
        <position position="170"/>
    </location>
    <ligand>
        <name>dCTP</name>
        <dbReference type="ChEBI" id="CHEBI:61481"/>
    </ligand>
</feature>
<feature type="binding site" evidence="1">
    <location>
        <position position="180"/>
    </location>
    <ligand>
        <name>dCTP</name>
        <dbReference type="ChEBI" id="CHEBI:61481"/>
    </ligand>
</feature>
<gene>
    <name evidence="1" type="primary">dcd</name>
    <name type="ordered locus">mma_1184</name>
</gene>
<proteinExistence type="inferred from homology"/>
<dbReference type="EC" id="3.5.4.13" evidence="1"/>
<dbReference type="EMBL" id="CP000269">
    <property type="protein sequence ID" value="ABR88764.1"/>
    <property type="molecule type" value="Genomic_DNA"/>
</dbReference>
<dbReference type="RefSeq" id="WP_012079041.1">
    <property type="nucleotide sequence ID" value="NC_009659.1"/>
</dbReference>
<dbReference type="SMR" id="A6SX77"/>
<dbReference type="STRING" id="375286.mma_1184"/>
<dbReference type="KEGG" id="mms:mma_1184"/>
<dbReference type="eggNOG" id="COG0717">
    <property type="taxonomic scope" value="Bacteria"/>
</dbReference>
<dbReference type="HOGENOM" id="CLU_087476_4_0_4"/>
<dbReference type="OrthoDB" id="9780956at2"/>
<dbReference type="UniPathway" id="UPA00610">
    <property type="reaction ID" value="UER00665"/>
</dbReference>
<dbReference type="Proteomes" id="UP000006388">
    <property type="component" value="Chromosome"/>
</dbReference>
<dbReference type="GO" id="GO:0008829">
    <property type="term" value="F:dCTP deaminase activity"/>
    <property type="evidence" value="ECO:0007669"/>
    <property type="project" value="UniProtKB-UniRule"/>
</dbReference>
<dbReference type="GO" id="GO:0000166">
    <property type="term" value="F:nucleotide binding"/>
    <property type="evidence" value="ECO:0007669"/>
    <property type="project" value="UniProtKB-KW"/>
</dbReference>
<dbReference type="GO" id="GO:0006226">
    <property type="term" value="P:dUMP biosynthetic process"/>
    <property type="evidence" value="ECO:0007669"/>
    <property type="project" value="UniProtKB-UniPathway"/>
</dbReference>
<dbReference type="GO" id="GO:0006229">
    <property type="term" value="P:dUTP biosynthetic process"/>
    <property type="evidence" value="ECO:0007669"/>
    <property type="project" value="UniProtKB-UniRule"/>
</dbReference>
<dbReference type="GO" id="GO:0015949">
    <property type="term" value="P:nucleobase-containing small molecule interconversion"/>
    <property type="evidence" value="ECO:0007669"/>
    <property type="project" value="TreeGrafter"/>
</dbReference>
<dbReference type="CDD" id="cd07557">
    <property type="entry name" value="trimeric_dUTPase"/>
    <property type="match status" value="1"/>
</dbReference>
<dbReference type="FunFam" id="2.70.40.10:FF:000001">
    <property type="entry name" value="dCTP deaminase"/>
    <property type="match status" value="1"/>
</dbReference>
<dbReference type="Gene3D" id="2.70.40.10">
    <property type="match status" value="1"/>
</dbReference>
<dbReference type="HAMAP" id="MF_00146">
    <property type="entry name" value="dCTP_deaminase"/>
    <property type="match status" value="1"/>
</dbReference>
<dbReference type="InterPro" id="IPR011962">
    <property type="entry name" value="dCTP_deaminase"/>
</dbReference>
<dbReference type="InterPro" id="IPR036157">
    <property type="entry name" value="dUTPase-like_sf"/>
</dbReference>
<dbReference type="InterPro" id="IPR033704">
    <property type="entry name" value="dUTPase_trimeric"/>
</dbReference>
<dbReference type="NCBIfam" id="TIGR02274">
    <property type="entry name" value="dCTP_deam"/>
    <property type="match status" value="1"/>
</dbReference>
<dbReference type="PANTHER" id="PTHR42680">
    <property type="entry name" value="DCTP DEAMINASE"/>
    <property type="match status" value="1"/>
</dbReference>
<dbReference type="PANTHER" id="PTHR42680:SF3">
    <property type="entry name" value="DCTP DEAMINASE"/>
    <property type="match status" value="1"/>
</dbReference>
<dbReference type="Pfam" id="PF22769">
    <property type="entry name" value="DCD"/>
    <property type="match status" value="1"/>
</dbReference>
<dbReference type="SUPFAM" id="SSF51283">
    <property type="entry name" value="dUTPase-like"/>
    <property type="match status" value="1"/>
</dbReference>
<keyword id="KW-0378">Hydrolase</keyword>
<keyword id="KW-0546">Nucleotide metabolism</keyword>
<keyword id="KW-0547">Nucleotide-binding</keyword>
<accession>A6SX77</accession>
<sequence length="188" mass="21200">MTIKSDKWIRRMAEQTGMIEPFEPGQVRQSNGQKIVSYGTSSYGYDIRCADEFKIFTNINSTIVDPKNFDENSFVDIKSDVCIIPPNSFALARTIEYFRIPRNVLTICLGKSTYARCGIIVNVTPFEPEWEGYVTLEFSNTTPLPAKIYAGEGCAQVLFFESDEVCETSYKDRGGKYQGQHGVTLPKT</sequence>
<name>DCD_JANMA</name>
<comment type="function">
    <text evidence="1">Catalyzes the deamination of dCTP to dUTP.</text>
</comment>
<comment type="catalytic activity">
    <reaction evidence="1">
        <text>dCTP + H2O + H(+) = dUTP + NH4(+)</text>
        <dbReference type="Rhea" id="RHEA:22680"/>
        <dbReference type="ChEBI" id="CHEBI:15377"/>
        <dbReference type="ChEBI" id="CHEBI:15378"/>
        <dbReference type="ChEBI" id="CHEBI:28938"/>
        <dbReference type="ChEBI" id="CHEBI:61481"/>
        <dbReference type="ChEBI" id="CHEBI:61555"/>
        <dbReference type="EC" id="3.5.4.13"/>
    </reaction>
</comment>
<comment type="pathway">
    <text evidence="1">Pyrimidine metabolism; dUMP biosynthesis; dUMP from dCTP (dUTP route): step 1/2.</text>
</comment>
<comment type="subunit">
    <text evidence="1">Homotrimer.</text>
</comment>
<comment type="similarity">
    <text evidence="1">Belongs to the dCTP deaminase family.</text>
</comment>
<protein>
    <recommendedName>
        <fullName evidence="1">dCTP deaminase</fullName>
        <ecNumber evidence="1">3.5.4.13</ecNumber>
    </recommendedName>
    <alternativeName>
        <fullName evidence="1">Deoxycytidine triphosphate deaminase</fullName>
    </alternativeName>
</protein>